<proteinExistence type="inferred from homology"/>
<evidence type="ECO:0000255" key="1">
    <source>
        <dbReference type="HAMAP-Rule" id="MF_01184"/>
    </source>
</evidence>
<sequence>MHALEQKILTEGIVLSDQVLKVDAFLNHQIDPVLMQQIGKEFAARFKDAGITKIITIEASGIAPAIMAGLELGVPVIFARKYQSLTLKDDLYRAKVFSFTKQTESTIAISNKHINSSDKALVIDDFLANGQAALGLIDLIHQANAEVVGVGIVIEKSFQPGRDLLLEKGYRVESLARVQSLADGTVTFVKE</sequence>
<accession>B7GW49</accession>
<dbReference type="EC" id="2.4.2.22" evidence="1"/>
<dbReference type="EMBL" id="CP001172">
    <property type="protein sequence ID" value="ACJ57959.1"/>
    <property type="molecule type" value="Genomic_DNA"/>
</dbReference>
<dbReference type="RefSeq" id="WP_000543071.1">
    <property type="nucleotide sequence ID" value="NZ_CP001172.1"/>
</dbReference>
<dbReference type="SMR" id="B7GW49"/>
<dbReference type="HOGENOM" id="CLU_099015_0_0_6"/>
<dbReference type="UniPathway" id="UPA00602">
    <property type="reaction ID" value="UER00658"/>
</dbReference>
<dbReference type="Proteomes" id="UP000006924">
    <property type="component" value="Chromosome"/>
</dbReference>
<dbReference type="GO" id="GO:0005737">
    <property type="term" value="C:cytoplasm"/>
    <property type="evidence" value="ECO:0007669"/>
    <property type="project" value="UniProtKB-SubCell"/>
</dbReference>
<dbReference type="GO" id="GO:0000310">
    <property type="term" value="F:xanthine phosphoribosyltransferase activity"/>
    <property type="evidence" value="ECO:0007669"/>
    <property type="project" value="UniProtKB-UniRule"/>
</dbReference>
<dbReference type="GO" id="GO:0006166">
    <property type="term" value="P:purine ribonucleoside salvage"/>
    <property type="evidence" value="ECO:0007669"/>
    <property type="project" value="UniProtKB-KW"/>
</dbReference>
<dbReference type="GO" id="GO:0046110">
    <property type="term" value="P:xanthine metabolic process"/>
    <property type="evidence" value="ECO:0007669"/>
    <property type="project" value="InterPro"/>
</dbReference>
<dbReference type="GO" id="GO:0032265">
    <property type="term" value="P:XMP salvage"/>
    <property type="evidence" value="ECO:0007669"/>
    <property type="project" value="UniProtKB-UniRule"/>
</dbReference>
<dbReference type="CDD" id="cd06223">
    <property type="entry name" value="PRTases_typeI"/>
    <property type="match status" value="1"/>
</dbReference>
<dbReference type="Gene3D" id="3.40.50.2020">
    <property type="match status" value="1"/>
</dbReference>
<dbReference type="HAMAP" id="MF_01184">
    <property type="entry name" value="XPRTase"/>
    <property type="match status" value="1"/>
</dbReference>
<dbReference type="InterPro" id="IPR000836">
    <property type="entry name" value="PRibTrfase_dom"/>
</dbReference>
<dbReference type="InterPro" id="IPR029057">
    <property type="entry name" value="PRTase-like"/>
</dbReference>
<dbReference type="InterPro" id="IPR050118">
    <property type="entry name" value="Pur/Pyrimidine_PRTase"/>
</dbReference>
<dbReference type="InterPro" id="IPR010079">
    <property type="entry name" value="Xanthine_PRibTrfase"/>
</dbReference>
<dbReference type="NCBIfam" id="NF006671">
    <property type="entry name" value="PRK09219.1"/>
    <property type="match status" value="1"/>
</dbReference>
<dbReference type="NCBIfam" id="TIGR01744">
    <property type="entry name" value="XPRTase"/>
    <property type="match status" value="1"/>
</dbReference>
<dbReference type="PANTHER" id="PTHR43864">
    <property type="entry name" value="HYPOXANTHINE/GUANINE PHOSPHORIBOSYLTRANSFERASE"/>
    <property type="match status" value="1"/>
</dbReference>
<dbReference type="PANTHER" id="PTHR43864:SF1">
    <property type="entry name" value="XANTHINE PHOSPHORIBOSYLTRANSFERASE"/>
    <property type="match status" value="1"/>
</dbReference>
<dbReference type="SUPFAM" id="SSF53271">
    <property type="entry name" value="PRTase-like"/>
    <property type="match status" value="1"/>
</dbReference>
<organism>
    <name type="scientific">Acinetobacter baumannii (strain AB307-0294)</name>
    <dbReference type="NCBI Taxonomy" id="557600"/>
    <lineage>
        <taxon>Bacteria</taxon>
        <taxon>Pseudomonadati</taxon>
        <taxon>Pseudomonadota</taxon>
        <taxon>Gammaproteobacteria</taxon>
        <taxon>Moraxellales</taxon>
        <taxon>Moraxellaceae</taxon>
        <taxon>Acinetobacter</taxon>
        <taxon>Acinetobacter calcoaceticus/baumannii complex</taxon>
    </lineage>
</organism>
<gene>
    <name evidence="1" type="primary">xpt</name>
    <name type="ordered locus">ABBFA_000483</name>
</gene>
<protein>
    <recommendedName>
        <fullName evidence="1">Xanthine phosphoribosyltransferase</fullName>
        <shortName evidence="1">XPRTase</shortName>
        <ecNumber evidence="1">2.4.2.22</ecNumber>
    </recommendedName>
</protein>
<keyword id="KW-0963">Cytoplasm</keyword>
<keyword id="KW-0328">Glycosyltransferase</keyword>
<keyword id="KW-0660">Purine salvage</keyword>
<keyword id="KW-0808">Transferase</keyword>
<feature type="chain" id="PRO_1000138226" description="Xanthine phosphoribosyltransferase">
    <location>
        <begin position="1"/>
        <end position="191"/>
    </location>
</feature>
<feature type="binding site" evidence="1">
    <location>
        <position position="20"/>
    </location>
    <ligand>
        <name>xanthine</name>
        <dbReference type="ChEBI" id="CHEBI:17712"/>
    </ligand>
</feature>
<feature type="binding site" evidence="1">
    <location>
        <position position="27"/>
    </location>
    <ligand>
        <name>xanthine</name>
        <dbReference type="ChEBI" id="CHEBI:17712"/>
    </ligand>
</feature>
<feature type="binding site" evidence="1">
    <location>
        <begin position="128"/>
        <end position="132"/>
    </location>
    <ligand>
        <name>5-phospho-alpha-D-ribose 1-diphosphate</name>
        <dbReference type="ChEBI" id="CHEBI:58017"/>
    </ligand>
</feature>
<feature type="binding site" evidence="1">
    <location>
        <position position="156"/>
    </location>
    <ligand>
        <name>xanthine</name>
        <dbReference type="ChEBI" id="CHEBI:17712"/>
    </ligand>
</feature>
<comment type="function">
    <text evidence="1">Converts the preformed base xanthine, a product of nucleic acid breakdown, to xanthosine 5'-monophosphate (XMP), so it can be reused for RNA or DNA synthesis.</text>
</comment>
<comment type="catalytic activity">
    <reaction evidence="1">
        <text>XMP + diphosphate = xanthine + 5-phospho-alpha-D-ribose 1-diphosphate</text>
        <dbReference type="Rhea" id="RHEA:10800"/>
        <dbReference type="ChEBI" id="CHEBI:17712"/>
        <dbReference type="ChEBI" id="CHEBI:33019"/>
        <dbReference type="ChEBI" id="CHEBI:57464"/>
        <dbReference type="ChEBI" id="CHEBI:58017"/>
        <dbReference type="EC" id="2.4.2.22"/>
    </reaction>
</comment>
<comment type="pathway">
    <text evidence="1">Purine metabolism; XMP biosynthesis via salvage pathway; XMP from xanthine: step 1/1.</text>
</comment>
<comment type="subunit">
    <text evidence="1">Homodimer.</text>
</comment>
<comment type="subcellular location">
    <subcellularLocation>
        <location evidence="1">Cytoplasm</location>
    </subcellularLocation>
</comment>
<comment type="similarity">
    <text evidence="1">Belongs to the purine/pyrimidine phosphoribosyltransferase family. Xpt subfamily.</text>
</comment>
<reference key="1">
    <citation type="journal article" date="2008" name="J. Bacteriol.">
        <title>Comparative genome sequence analysis of multidrug-resistant Acinetobacter baumannii.</title>
        <authorList>
            <person name="Adams M.D."/>
            <person name="Goglin K."/>
            <person name="Molyneaux N."/>
            <person name="Hujer K.M."/>
            <person name="Lavender H."/>
            <person name="Jamison J.J."/>
            <person name="MacDonald I.J."/>
            <person name="Martin K.M."/>
            <person name="Russo T."/>
            <person name="Campagnari A.A."/>
            <person name="Hujer A.M."/>
            <person name="Bonomo R.A."/>
            <person name="Gill S.R."/>
        </authorList>
    </citation>
    <scope>NUCLEOTIDE SEQUENCE [LARGE SCALE GENOMIC DNA]</scope>
    <source>
        <strain>AB307-0294</strain>
    </source>
</reference>
<name>XPT_ACIB3</name>